<gene>
    <name type="primary">hisH</name>
    <name type="ordered locus">BUsg_096</name>
</gene>
<protein>
    <recommendedName>
        <fullName>Imidazole glycerol phosphate synthase subunit HisH</fullName>
        <ecNumber>4.3.2.10</ecNumber>
    </recommendedName>
    <alternativeName>
        <fullName>IGP synthase glutaminase subunit</fullName>
        <ecNumber>3.5.1.2</ecNumber>
    </alternativeName>
    <alternativeName>
        <fullName>IGP synthase subunit HisH</fullName>
    </alternativeName>
    <alternativeName>
        <fullName>ImGP synthase subunit HisH</fullName>
        <shortName>IGPS subunit HisH</shortName>
    </alternativeName>
</protein>
<keyword id="KW-0028">Amino-acid biosynthesis</keyword>
<keyword id="KW-0963">Cytoplasm</keyword>
<keyword id="KW-0315">Glutamine amidotransferase</keyword>
<keyword id="KW-0368">Histidine biosynthesis</keyword>
<keyword id="KW-0378">Hydrolase</keyword>
<keyword id="KW-0456">Lyase</keyword>
<organism>
    <name type="scientific">Buchnera aphidicola subsp. Schizaphis graminum (strain Sg)</name>
    <dbReference type="NCBI Taxonomy" id="198804"/>
    <lineage>
        <taxon>Bacteria</taxon>
        <taxon>Pseudomonadati</taxon>
        <taxon>Pseudomonadota</taxon>
        <taxon>Gammaproteobacteria</taxon>
        <taxon>Enterobacterales</taxon>
        <taxon>Erwiniaceae</taxon>
        <taxon>Buchnera</taxon>
    </lineage>
</organism>
<proteinExistence type="inferred from homology"/>
<comment type="function">
    <text evidence="1">IGPS catalyzes the conversion of PRFAR and glutamine to IGP, AICAR and glutamate. The HisH subunit catalyzes the hydrolysis of glutamine to glutamate and ammonia as part of the synthesis of IGP and AICAR. The resulting ammonia molecule is channeled to the active site of HisF (By similarity).</text>
</comment>
<comment type="catalytic activity">
    <reaction>
        <text>5-[(5-phospho-1-deoxy-D-ribulos-1-ylimino)methylamino]-1-(5-phospho-beta-D-ribosyl)imidazole-4-carboxamide + L-glutamine = D-erythro-1-(imidazol-4-yl)glycerol 3-phosphate + 5-amino-1-(5-phospho-beta-D-ribosyl)imidazole-4-carboxamide + L-glutamate + H(+)</text>
        <dbReference type="Rhea" id="RHEA:24793"/>
        <dbReference type="ChEBI" id="CHEBI:15378"/>
        <dbReference type="ChEBI" id="CHEBI:29985"/>
        <dbReference type="ChEBI" id="CHEBI:58278"/>
        <dbReference type="ChEBI" id="CHEBI:58359"/>
        <dbReference type="ChEBI" id="CHEBI:58475"/>
        <dbReference type="ChEBI" id="CHEBI:58525"/>
        <dbReference type="EC" id="4.3.2.10"/>
    </reaction>
</comment>
<comment type="catalytic activity">
    <reaction>
        <text>L-glutamine + H2O = L-glutamate + NH4(+)</text>
        <dbReference type="Rhea" id="RHEA:15889"/>
        <dbReference type="ChEBI" id="CHEBI:15377"/>
        <dbReference type="ChEBI" id="CHEBI:28938"/>
        <dbReference type="ChEBI" id="CHEBI:29985"/>
        <dbReference type="ChEBI" id="CHEBI:58359"/>
        <dbReference type="EC" id="3.5.1.2"/>
    </reaction>
</comment>
<comment type="pathway">
    <text>Amino-acid biosynthesis; L-histidine biosynthesis; L-histidine from 5-phospho-alpha-D-ribose 1-diphosphate: step 5/9.</text>
</comment>
<comment type="subunit">
    <text evidence="1">Heterodimer of HisH and HisF.</text>
</comment>
<comment type="subcellular location">
    <subcellularLocation>
        <location evidence="1">Cytoplasm</location>
    </subcellularLocation>
</comment>
<reference key="1">
    <citation type="journal article" date="1998" name="Curr. Microbiol.">
        <title>Buchnera aphidicola (Aphid endosymbiont) contains genes encoding enzymes of histidine biosynthesis.</title>
        <authorList>
            <person name="Clark M.A."/>
            <person name="Baumann L."/>
            <person name="Baumann P."/>
        </authorList>
    </citation>
    <scope>NUCLEOTIDE SEQUENCE [GENOMIC DNA]</scope>
</reference>
<reference key="2">
    <citation type="journal article" date="2002" name="Science">
        <title>50 million years of genomic stasis in endosymbiotic bacteria.</title>
        <authorList>
            <person name="Tamas I."/>
            <person name="Klasson L."/>
            <person name="Canbaeck B."/>
            <person name="Naeslund A.K."/>
            <person name="Eriksson A.-S."/>
            <person name="Wernegreen J.J."/>
            <person name="Sandstroem J.P."/>
            <person name="Moran N.A."/>
            <person name="Andersson S.G.E."/>
        </authorList>
    </citation>
    <scope>NUCLEOTIDE SEQUENCE [LARGE SCALE GENOMIC DNA]</scope>
    <source>
        <strain>Sg</strain>
    </source>
</reference>
<sequence>MDIAILNTGCANLTSIQVAIKKLGYDSIVTSDPSIVLKSKKIFLPGVGTALAAMEQLHKKNLINTLKKLTQPILGICLGMQIFSQFSEECKGVKTIGIFDNCFTHLLKSSNLPLPHMGWNHIVFNNLHPLFKNIDKKERFYFVHSYIIPLNKYTLAKTKYGVSFSSVMQKNNFFGVQFHPEKSGDAGAQLLKNFLEI</sequence>
<evidence type="ECO:0000250" key="1"/>
<name>HIS5_BUCAP</name>
<feature type="chain" id="PRO_0000152355" description="Imidazole glycerol phosphate synthase subunit HisH">
    <location>
        <begin position="1"/>
        <end position="197"/>
    </location>
</feature>
<feature type="domain" description="Glutamine amidotransferase type-1">
    <location>
        <begin position="2"/>
        <end position="197"/>
    </location>
</feature>
<feature type="active site" description="Nucleophile" evidence="1">
    <location>
        <position position="77"/>
    </location>
</feature>
<feature type="active site" evidence="1">
    <location>
        <position position="179"/>
    </location>
</feature>
<feature type="active site" evidence="1">
    <location>
        <position position="181"/>
    </location>
</feature>
<dbReference type="EC" id="4.3.2.10"/>
<dbReference type="EC" id="3.5.1.2"/>
<dbReference type="EMBL" id="AF067228">
    <property type="protein sequence ID" value="AAC97358.1"/>
    <property type="molecule type" value="Genomic_DNA"/>
</dbReference>
<dbReference type="EMBL" id="AE013218">
    <property type="protein sequence ID" value="AAM67666.1"/>
    <property type="molecule type" value="Genomic_DNA"/>
</dbReference>
<dbReference type="RefSeq" id="WP_011053632.1">
    <property type="nucleotide sequence ID" value="NC_004061.1"/>
</dbReference>
<dbReference type="SMR" id="Q9ZHE3"/>
<dbReference type="STRING" id="198804.BUsg_096"/>
<dbReference type="MEROPS" id="C26.965"/>
<dbReference type="GeneID" id="93003565"/>
<dbReference type="KEGG" id="bas:BUsg_096"/>
<dbReference type="eggNOG" id="COG0118">
    <property type="taxonomic scope" value="Bacteria"/>
</dbReference>
<dbReference type="HOGENOM" id="CLU_071837_0_0_6"/>
<dbReference type="UniPathway" id="UPA00031">
    <property type="reaction ID" value="UER00010"/>
</dbReference>
<dbReference type="Proteomes" id="UP000000416">
    <property type="component" value="Chromosome"/>
</dbReference>
<dbReference type="GO" id="GO:0005737">
    <property type="term" value="C:cytoplasm"/>
    <property type="evidence" value="ECO:0007669"/>
    <property type="project" value="UniProtKB-SubCell"/>
</dbReference>
<dbReference type="GO" id="GO:0004359">
    <property type="term" value="F:glutaminase activity"/>
    <property type="evidence" value="ECO:0007669"/>
    <property type="project" value="UniProtKB-EC"/>
</dbReference>
<dbReference type="GO" id="GO:0000107">
    <property type="term" value="F:imidazoleglycerol-phosphate synthase activity"/>
    <property type="evidence" value="ECO:0007669"/>
    <property type="project" value="UniProtKB-UniRule"/>
</dbReference>
<dbReference type="GO" id="GO:0016829">
    <property type="term" value="F:lyase activity"/>
    <property type="evidence" value="ECO:0007669"/>
    <property type="project" value="UniProtKB-KW"/>
</dbReference>
<dbReference type="GO" id="GO:0000105">
    <property type="term" value="P:L-histidine biosynthetic process"/>
    <property type="evidence" value="ECO:0007669"/>
    <property type="project" value="UniProtKB-UniRule"/>
</dbReference>
<dbReference type="CDD" id="cd01748">
    <property type="entry name" value="GATase1_IGP_Synthase"/>
    <property type="match status" value="1"/>
</dbReference>
<dbReference type="FunFam" id="3.40.50.880:FF:000009">
    <property type="entry name" value="Imidazole glycerol phosphate synthase subunit HisH"/>
    <property type="match status" value="1"/>
</dbReference>
<dbReference type="Gene3D" id="3.40.50.880">
    <property type="match status" value="1"/>
</dbReference>
<dbReference type="HAMAP" id="MF_00278">
    <property type="entry name" value="HisH"/>
    <property type="match status" value="1"/>
</dbReference>
<dbReference type="InterPro" id="IPR029062">
    <property type="entry name" value="Class_I_gatase-like"/>
</dbReference>
<dbReference type="InterPro" id="IPR017926">
    <property type="entry name" value="GATASE"/>
</dbReference>
<dbReference type="InterPro" id="IPR010139">
    <property type="entry name" value="Imidazole-glycPsynth_HisH"/>
</dbReference>
<dbReference type="NCBIfam" id="TIGR01855">
    <property type="entry name" value="IMP_synth_hisH"/>
    <property type="match status" value="1"/>
</dbReference>
<dbReference type="PANTHER" id="PTHR42701">
    <property type="entry name" value="IMIDAZOLE GLYCEROL PHOSPHATE SYNTHASE SUBUNIT HISH"/>
    <property type="match status" value="1"/>
</dbReference>
<dbReference type="PANTHER" id="PTHR42701:SF1">
    <property type="entry name" value="IMIDAZOLE GLYCEROL PHOSPHATE SYNTHASE SUBUNIT HISH"/>
    <property type="match status" value="1"/>
</dbReference>
<dbReference type="Pfam" id="PF00117">
    <property type="entry name" value="GATase"/>
    <property type="match status" value="1"/>
</dbReference>
<dbReference type="PIRSF" id="PIRSF000495">
    <property type="entry name" value="Amidotransf_hisH"/>
    <property type="match status" value="1"/>
</dbReference>
<dbReference type="SUPFAM" id="SSF52317">
    <property type="entry name" value="Class I glutamine amidotransferase-like"/>
    <property type="match status" value="1"/>
</dbReference>
<dbReference type="PROSITE" id="PS51273">
    <property type="entry name" value="GATASE_TYPE_1"/>
    <property type="match status" value="1"/>
</dbReference>
<accession>Q9ZHE3</accession>